<gene>
    <name type="primary">sigF</name>
    <name type="synonym">spoIIAC</name>
</gene>
<comment type="function">
    <text>Sigma factors are initiation factors that promote the attachment of RNA polymerase to specific initiation sites and are then released. This sigma factor is responsible for the expression of sporulation specific genes. It is responsible for directing gene expression in the forespore compartment of developing cells of Bacillus.</text>
</comment>
<comment type="similarity">
    <text evidence="2">Belongs to the sigma-70 factor family.</text>
</comment>
<reference key="1">
    <citation type="journal article" date="1992" name="Biochimie">
        <title>Cloning and sequencing of the Bacillus megaterium spoIIA operon.</title>
        <authorList>
            <person name="Tao Y.P."/>
            <person name="Hudspeth D.S.S."/>
            <person name="Vary P.S."/>
        </authorList>
    </citation>
    <scope>NUCLEOTIDE SEQUENCE [GENOMIC DNA]</scope>
</reference>
<sequence>MDVEVKKNKNEPYLKDHEVKDLIKRSQQGDQIARDTIVQKNMRLVWSVVQRFINRGYEPDDLFQIGCIGLLKSVDKFDLSYDVKFSTYAVPMIIGEIQRFIRDDGTVKVSRSLKEMSNKIRKAKDELSKLLGRVPTVAEVAEHLDLTPEEVVLAQEANRAPSSIHETVYENDGDPITLLDQIADHTEAKWFDKIALKEAIEELDEREKLIVYLRYYKDQTQSEVAARLGISQVQVSRLEKKILKQMKLHMNDT</sequence>
<dbReference type="EMBL" id="X63757">
    <property type="protein sequence ID" value="CAA45288.1"/>
    <property type="molecule type" value="Genomic_DNA"/>
</dbReference>
<dbReference type="PIR" id="C48402">
    <property type="entry name" value="C48402"/>
</dbReference>
<dbReference type="RefSeq" id="WP_013059074.1">
    <property type="nucleotide sequence ID" value="NZ_WWFB01000002.1"/>
</dbReference>
<dbReference type="SMR" id="P35145"/>
<dbReference type="GeneID" id="93644784"/>
<dbReference type="OMA" id="RDDGMIK"/>
<dbReference type="GO" id="GO:0003677">
    <property type="term" value="F:DNA binding"/>
    <property type="evidence" value="ECO:0007669"/>
    <property type="project" value="UniProtKB-KW"/>
</dbReference>
<dbReference type="GO" id="GO:0016987">
    <property type="term" value="F:sigma factor activity"/>
    <property type="evidence" value="ECO:0007669"/>
    <property type="project" value="UniProtKB-KW"/>
</dbReference>
<dbReference type="GO" id="GO:0006352">
    <property type="term" value="P:DNA-templated transcription initiation"/>
    <property type="evidence" value="ECO:0007669"/>
    <property type="project" value="InterPro"/>
</dbReference>
<dbReference type="GO" id="GO:0030435">
    <property type="term" value="P:sporulation resulting in formation of a cellular spore"/>
    <property type="evidence" value="ECO:0007669"/>
    <property type="project" value="UniProtKB-KW"/>
</dbReference>
<dbReference type="CDD" id="cd06171">
    <property type="entry name" value="Sigma70_r4"/>
    <property type="match status" value="1"/>
</dbReference>
<dbReference type="Gene3D" id="1.20.120.1810">
    <property type="match status" value="1"/>
</dbReference>
<dbReference type="Gene3D" id="1.10.10.10">
    <property type="entry name" value="Winged helix-like DNA-binding domain superfamily/Winged helix DNA-binding domain"/>
    <property type="match status" value="2"/>
</dbReference>
<dbReference type="InterPro" id="IPR001387">
    <property type="entry name" value="Cro/C1-type_HTH"/>
</dbReference>
<dbReference type="InterPro" id="IPR014284">
    <property type="entry name" value="RNA_pol_sigma-70_dom"/>
</dbReference>
<dbReference type="InterPro" id="IPR014322">
    <property type="entry name" value="RNA_pol_sigma-B/F/G"/>
</dbReference>
<dbReference type="InterPro" id="IPR014236">
    <property type="entry name" value="RNA_pol_sigma-F"/>
</dbReference>
<dbReference type="InterPro" id="IPR000943">
    <property type="entry name" value="RNA_pol_sigma70"/>
</dbReference>
<dbReference type="InterPro" id="IPR007627">
    <property type="entry name" value="RNA_pol_sigma70_r2"/>
</dbReference>
<dbReference type="InterPro" id="IPR007624">
    <property type="entry name" value="RNA_pol_sigma70_r3"/>
</dbReference>
<dbReference type="InterPro" id="IPR007630">
    <property type="entry name" value="RNA_pol_sigma70_r4"/>
</dbReference>
<dbReference type="InterPro" id="IPR013325">
    <property type="entry name" value="RNA_pol_sigma_r2"/>
</dbReference>
<dbReference type="InterPro" id="IPR013324">
    <property type="entry name" value="RNA_pol_sigma_r3/r4-like"/>
</dbReference>
<dbReference type="InterPro" id="IPR050239">
    <property type="entry name" value="Sigma-70_RNA_pol_init_factors"/>
</dbReference>
<dbReference type="InterPro" id="IPR036388">
    <property type="entry name" value="WH-like_DNA-bd_sf"/>
</dbReference>
<dbReference type="NCBIfam" id="NF004052">
    <property type="entry name" value="PRK05572.1"/>
    <property type="match status" value="1"/>
</dbReference>
<dbReference type="NCBIfam" id="TIGR02980">
    <property type="entry name" value="SigBFG"/>
    <property type="match status" value="1"/>
</dbReference>
<dbReference type="NCBIfam" id="TIGR02937">
    <property type="entry name" value="sigma70-ECF"/>
    <property type="match status" value="1"/>
</dbReference>
<dbReference type="NCBIfam" id="TIGR02885">
    <property type="entry name" value="spore_sigF"/>
    <property type="match status" value="1"/>
</dbReference>
<dbReference type="PANTHER" id="PTHR30603">
    <property type="entry name" value="RNA POLYMERASE SIGMA FACTOR RPO"/>
    <property type="match status" value="1"/>
</dbReference>
<dbReference type="PANTHER" id="PTHR30603:SF19">
    <property type="entry name" value="RNA POLYMERASE SIGMA-F FACTOR"/>
    <property type="match status" value="1"/>
</dbReference>
<dbReference type="Pfam" id="PF04542">
    <property type="entry name" value="Sigma70_r2"/>
    <property type="match status" value="1"/>
</dbReference>
<dbReference type="Pfam" id="PF04539">
    <property type="entry name" value="Sigma70_r3"/>
    <property type="match status" value="1"/>
</dbReference>
<dbReference type="Pfam" id="PF04545">
    <property type="entry name" value="Sigma70_r4"/>
    <property type="match status" value="1"/>
</dbReference>
<dbReference type="PIRSF" id="PIRSF000770">
    <property type="entry name" value="RNA_pol_sigma-SigE/K"/>
    <property type="match status" value="1"/>
</dbReference>
<dbReference type="PRINTS" id="PR00046">
    <property type="entry name" value="SIGMA70FCT"/>
</dbReference>
<dbReference type="SUPFAM" id="SSF88946">
    <property type="entry name" value="Sigma2 domain of RNA polymerase sigma factors"/>
    <property type="match status" value="1"/>
</dbReference>
<dbReference type="SUPFAM" id="SSF88659">
    <property type="entry name" value="Sigma3 and sigma4 domains of RNA polymerase sigma factors"/>
    <property type="match status" value="2"/>
</dbReference>
<dbReference type="PROSITE" id="PS00715">
    <property type="entry name" value="SIGMA70_1"/>
    <property type="match status" value="1"/>
</dbReference>
<dbReference type="PROSITE" id="PS00716">
    <property type="entry name" value="SIGMA70_2"/>
    <property type="match status" value="1"/>
</dbReference>
<proteinExistence type="inferred from homology"/>
<evidence type="ECO:0000250" key="1"/>
<evidence type="ECO:0000305" key="2"/>
<feature type="chain" id="PRO_0000093942" description="RNA polymerase sigma-F factor">
    <location>
        <begin position="1"/>
        <end position="253"/>
    </location>
</feature>
<feature type="DNA-binding region" description="H-T-H motif" evidence="1">
    <location>
        <begin position="221"/>
        <end position="240"/>
    </location>
</feature>
<feature type="short sequence motif" description="Polymerase core binding">
    <location>
        <begin position="61"/>
        <end position="74"/>
    </location>
</feature>
<organism>
    <name type="scientific">Priestia megaterium</name>
    <name type="common">Bacillus megaterium</name>
    <dbReference type="NCBI Taxonomy" id="1404"/>
    <lineage>
        <taxon>Bacteria</taxon>
        <taxon>Bacillati</taxon>
        <taxon>Bacillota</taxon>
        <taxon>Bacilli</taxon>
        <taxon>Bacillales</taxon>
        <taxon>Bacillaceae</taxon>
        <taxon>Priestia</taxon>
    </lineage>
</organism>
<accession>P35145</accession>
<keyword id="KW-0238">DNA-binding</keyword>
<keyword id="KW-0731">Sigma factor</keyword>
<keyword id="KW-0749">Sporulation</keyword>
<keyword id="KW-0804">Transcription</keyword>
<keyword id="KW-0805">Transcription regulation</keyword>
<protein>
    <recommendedName>
        <fullName>RNA polymerase sigma-F factor</fullName>
    </recommendedName>
    <alternativeName>
        <fullName>Sporulation sigma factor</fullName>
    </alternativeName>
    <alternativeName>
        <fullName>Stage II sporulation protein AC</fullName>
    </alternativeName>
</protein>
<name>RPSF_PRIMG</name>